<sequence length="90" mass="9393">MPKRKAEGDAKGDKAKVKDEPQRRSARLSAKPAPPKPEPKPKKAPAKKGEKVPKGKKGKADAGKEGNNPAENGDAKTDQAQKAEGAGDAK</sequence>
<keyword id="KW-0007">Acetylation</keyword>
<keyword id="KW-0013">ADP-ribosylation</keyword>
<keyword id="KW-0963">Cytoplasm</keyword>
<keyword id="KW-0903">Direct protein sequencing</keyword>
<keyword id="KW-0238">DNA-binding</keyword>
<keyword id="KW-1017">Isopeptide bond</keyword>
<keyword id="KW-0539">Nucleus</keyword>
<keyword id="KW-0597">Phosphoprotein</keyword>
<keyword id="KW-1267">Proteomics identification</keyword>
<keyword id="KW-1185">Reference proteome</keyword>
<keyword id="KW-0832">Ubl conjugation</keyword>
<organism>
    <name type="scientific">Homo sapiens</name>
    <name type="common">Human</name>
    <dbReference type="NCBI Taxonomy" id="9606"/>
    <lineage>
        <taxon>Eukaryota</taxon>
        <taxon>Metazoa</taxon>
        <taxon>Chordata</taxon>
        <taxon>Craniata</taxon>
        <taxon>Vertebrata</taxon>
        <taxon>Euteleostomi</taxon>
        <taxon>Mammalia</taxon>
        <taxon>Eutheria</taxon>
        <taxon>Euarchontoglires</taxon>
        <taxon>Primates</taxon>
        <taxon>Haplorrhini</taxon>
        <taxon>Catarrhini</taxon>
        <taxon>Hominidae</taxon>
        <taxon>Homo</taxon>
    </lineage>
</organism>
<comment type="function">
    <text evidence="1">Binds to the inner side of the nucleosomal DNA thus altering the interaction between the DNA and the histone octamer. May be involved in the process which maintains transcribable genes in a unique chromatin conformation (By similarity).</text>
</comment>
<comment type="interaction">
    <interactant intactId="EBI-1758689">
        <id>P05204</id>
    </interactant>
    <interactant intactId="EBI-2795348">
        <id>Q9UGN5</id>
        <label>PARP2</label>
    </interactant>
    <organismsDiffer>false</organismsDiffer>
    <experiments>2</experiments>
</comment>
<comment type="interaction">
    <interactant intactId="EBI-1758689">
        <id>P05204</id>
    </interactant>
    <interactant intactId="EBI-706637">
        <id>Q15554</id>
        <label>TERF2</label>
    </interactant>
    <organismsDiffer>false</organismsDiffer>
    <experiments>2</experiments>
</comment>
<comment type="subcellular location">
    <subcellularLocation>
        <location evidence="3">Nucleus</location>
    </subcellularLocation>
    <subcellularLocation>
        <location evidence="3">Cytoplasm</location>
    </subcellularLocation>
    <text>Cytoplasmic enrichment upon phosphorylation.</text>
</comment>
<comment type="PTM">
    <text evidence="3">Phosphorylation favors cytoplasmic localization.</text>
</comment>
<comment type="mass spectrometry" mass="9261.5" method="Electrospray" evidence="3"/>
<comment type="mass spectrometry" mass="9341.3" error="1.9" method="Electrospray" evidence="3"/>
<comment type="mass spectrometry" mass="9421.5" method="Electrospray" evidence="3"/>
<comment type="similarity">
    <text evidence="6">Belongs to the HMGN family.</text>
</comment>
<name>HMGN2_HUMAN</name>
<dbReference type="EMBL" id="M12623">
    <property type="protein sequence ID" value="AAA52678.1"/>
    <property type="molecule type" value="mRNA"/>
</dbReference>
<dbReference type="EMBL" id="X13546">
    <property type="protein sequence ID" value="CAA31898.1"/>
    <property type="molecule type" value="Genomic_DNA"/>
</dbReference>
<dbReference type="EMBL" id="CR542122">
    <property type="protein sequence ID" value="CAG46919.1"/>
    <property type="molecule type" value="mRNA"/>
</dbReference>
<dbReference type="EMBL" id="AL513365">
    <property type="status" value="NOT_ANNOTATED_CDS"/>
    <property type="molecule type" value="Genomic_DNA"/>
</dbReference>
<dbReference type="EMBL" id="BC000378">
    <property type="protein sequence ID" value="AAH00378.1"/>
    <property type="molecule type" value="mRNA"/>
</dbReference>
<dbReference type="EMBL" id="BC003050">
    <property type="protein sequence ID" value="AAH03050.1"/>
    <property type="molecule type" value="mRNA"/>
</dbReference>
<dbReference type="EMBL" id="BC014644">
    <property type="protein sequence ID" value="AAH14644.2"/>
    <property type="molecule type" value="mRNA"/>
</dbReference>
<dbReference type="EMBL" id="BC032140">
    <property type="protein sequence ID" value="AAH32140.2"/>
    <property type="molecule type" value="mRNA"/>
</dbReference>
<dbReference type="EMBL" id="BC070297">
    <property type="protein sequence ID" value="AAH70297.1"/>
    <property type="molecule type" value="mRNA"/>
</dbReference>
<dbReference type="EMBL" id="BC071707">
    <property type="protein sequence ID" value="AAH71707.1"/>
    <property type="molecule type" value="mRNA"/>
</dbReference>
<dbReference type="EMBL" id="BC072010">
    <property type="protein sequence ID" value="AAH72010.1"/>
    <property type="molecule type" value="mRNA"/>
</dbReference>
<dbReference type="EMBL" id="BC072011">
    <property type="protein sequence ID" value="AAH72011.1"/>
    <property type="molecule type" value="mRNA"/>
</dbReference>
<dbReference type="EMBL" id="BC075837">
    <property type="protein sequence ID" value="AAH75837.1"/>
    <property type="molecule type" value="mRNA"/>
</dbReference>
<dbReference type="EMBL" id="BC081567">
    <property type="protein sequence ID" value="AAH81567.1"/>
    <property type="molecule type" value="mRNA"/>
</dbReference>
<dbReference type="EMBL" id="BC110390">
    <property type="protein sequence ID" value="AAI10391.1"/>
    <property type="molecule type" value="mRNA"/>
</dbReference>
<dbReference type="CCDS" id="CCDS283.1"/>
<dbReference type="PIR" id="S03700">
    <property type="entry name" value="S03700"/>
</dbReference>
<dbReference type="RefSeq" id="NP_005508.1">
    <property type="nucleotide sequence ID" value="NM_005517.4"/>
</dbReference>
<dbReference type="BioGRID" id="109394">
    <property type="interactions" value="234"/>
</dbReference>
<dbReference type="FunCoup" id="P05204">
    <property type="interactions" value="1617"/>
</dbReference>
<dbReference type="IntAct" id="P05204">
    <property type="interactions" value="109"/>
</dbReference>
<dbReference type="MINT" id="P05204"/>
<dbReference type="STRING" id="9606.ENSP00000355228"/>
<dbReference type="GlyGen" id="P05204">
    <property type="glycosylation" value="1 site, 1 O-linked glycan (1 site)"/>
</dbReference>
<dbReference type="iPTMnet" id="P05204"/>
<dbReference type="PhosphoSitePlus" id="P05204"/>
<dbReference type="SwissPalm" id="P05204"/>
<dbReference type="BioMuta" id="HMGN2"/>
<dbReference type="DMDM" id="123106"/>
<dbReference type="jPOST" id="P05204"/>
<dbReference type="MassIVE" id="P05204"/>
<dbReference type="PaxDb" id="9606-ENSP00000355228"/>
<dbReference type="PeptideAtlas" id="P05204"/>
<dbReference type="ProteomicsDB" id="51825"/>
<dbReference type="Pumba" id="P05204"/>
<dbReference type="TopDownProteomics" id="P05204"/>
<dbReference type="Antibodypedia" id="30645">
    <property type="antibodies" value="296 antibodies from 34 providers"/>
</dbReference>
<dbReference type="DNASU" id="3151"/>
<dbReference type="Ensembl" id="ENST00000361427.6">
    <property type="protein sequence ID" value="ENSP00000355228.5"/>
    <property type="gene ID" value="ENSG00000198830.13"/>
</dbReference>
<dbReference type="Ensembl" id="ENST00000718304.1">
    <property type="protein sequence ID" value="ENSP00000520737.1"/>
    <property type="gene ID" value="ENSG00000198830.13"/>
</dbReference>
<dbReference type="GeneID" id="3151"/>
<dbReference type="KEGG" id="hsa:3151"/>
<dbReference type="MANE-Select" id="ENST00000361427.6">
    <property type="protein sequence ID" value="ENSP00000355228.5"/>
    <property type="RefSeq nucleotide sequence ID" value="NM_005517.4"/>
    <property type="RefSeq protein sequence ID" value="NP_005508.1"/>
</dbReference>
<dbReference type="UCSC" id="uc001bmp.5">
    <property type="organism name" value="human"/>
</dbReference>
<dbReference type="AGR" id="HGNC:4986"/>
<dbReference type="CTD" id="3151"/>
<dbReference type="DisGeNET" id="3151"/>
<dbReference type="GeneCards" id="HMGN2"/>
<dbReference type="HGNC" id="HGNC:4986">
    <property type="gene designation" value="HMGN2"/>
</dbReference>
<dbReference type="HPA" id="ENSG00000198830">
    <property type="expression patterns" value="Low tissue specificity"/>
</dbReference>
<dbReference type="MIM" id="163910">
    <property type="type" value="gene"/>
</dbReference>
<dbReference type="neXtProt" id="NX_P05204"/>
<dbReference type="OpenTargets" id="ENSG00000198830"/>
<dbReference type="PharmGKB" id="PA35089"/>
<dbReference type="VEuPathDB" id="HostDB:ENSG00000198830"/>
<dbReference type="eggNOG" id="ENOG502S5FK">
    <property type="taxonomic scope" value="Eukaryota"/>
</dbReference>
<dbReference type="GeneTree" id="ENSGT00950000182802"/>
<dbReference type="HOGENOM" id="CLU_141985_0_2_1"/>
<dbReference type="InParanoid" id="P05204"/>
<dbReference type="OMA" id="SEQQHCR"/>
<dbReference type="PAN-GO" id="P05204">
    <property type="GO annotations" value="3 GO annotations based on evolutionary models"/>
</dbReference>
<dbReference type="PhylomeDB" id="P05204"/>
<dbReference type="PathwayCommons" id="P05204"/>
<dbReference type="SignaLink" id="P05204"/>
<dbReference type="SIGNOR" id="P05204"/>
<dbReference type="BioGRID-ORCS" id="3151">
    <property type="hits" value="381 hits in 1164 CRISPR screens"/>
</dbReference>
<dbReference type="ChiTaRS" id="HMGN2">
    <property type="organism name" value="human"/>
</dbReference>
<dbReference type="GeneWiki" id="HMGN2"/>
<dbReference type="GenomeRNAi" id="3151"/>
<dbReference type="Pharos" id="P05204">
    <property type="development level" value="Tbio"/>
</dbReference>
<dbReference type="PRO" id="PR:P05204"/>
<dbReference type="Proteomes" id="UP000005640">
    <property type="component" value="Chromosome 1"/>
</dbReference>
<dbReference type="RNAct" id="P05204">
    <property type="molecule type" value="protein"/>
</dbReference>
<dbReference type="Bgee" id="ENSG00000198830">
    <property type="expression patterns" value="Expressed in ventricular zone and 104 other cell types or tissues"/>
</dbReference>
<dbReference type="GO" id="GO:0000785">
    <property type="term" value="C:chromatin"/>
    <property type="evidence" value="ECO:0007669"/>
    <property type="project" value="InterPro"/>
</dbReference>
<dbReference type="GO" id="GO:0005737">
    <property type="term" value="C:cytoplasm"/>
    <property type="evidence" value="ECO:0000314"/>
    <property type="project" value="UniProtKB"/>
</dbReference>
<dbReference type="GO" id="GO:0005615">
    <property type="term" value="C:extracellular space"/>
    <property type="evidence" value="ECO:0000314"/>
    <property type="project" value="UniProtKB"/>
</dbReference>
<dbReference type="GO" id="GO:0005634">
    <property type="term" value="C:nucleus"/>
    <property type="evidence" value="ECO:0000314"/>
    <property type="project" value="UniProtKB"/>
</dbReference>
<dbReference type="GO" id="GO:0003682">
    <property type="term" value="F:chromatin binding"/>
    <property type="evidence" value="ECO:0000318"/>
    <property type="project" value="GO_Central"/>
</dbReference>
<dbReference type="GO" id="GO:0031492">
    <property type="term" value="F:nucleosomal DNA binding"/>
    <property type="evidence" value="ECO:0007669"/>
    <property type="project" value="InterPro"/>
</dbReference>
<dbReference type="GO" id="GO:0003723">
    <property type="term" value="F:RNA binding"/>
    <property type="evidence" value="ECO:0007005"/>
    <property type="project" value="UniProtKB"/>
</dbReference>
<dbReference type="GO" id="GO:0061844">
    <property type="term" value="P:antimicrobial humoral immune response mediated by antimicrobial peptide"/>
    <property type="evidence" value="ECO:0000315"/>
    <property type="project" value="UniProtKB"/>
</dbReference>
<dbReference type="GO" id="GO:0006325">
    <property type="term" value="P:chromatin organization"/>
    <property type="evidence" value="ECO:0000318"/>
    <property type="project" value="GO_Central"/>
</dbReference>
<dbReference type="GO" id="GO:0031640">
    <property type="term" value="P:killing of cells of another organism"/>
    <property type="evidence" value="ECO:0000315"/>
    <property type="project" value="UniProtKB"/>
</dbReference>
<dbReference type="InterPro" id="IPR000079">
    <property type="entry name" value="HMGN_fam"/>
</dbReference>
<dbReference type="PANTHER" id="PTHR23087:SF13">
    <property type="entry name" value="NON-HISTONE CHROMOSOMAL PROTEIN HMG-17"/>
    <property type="match status" value="1"/>
</dbReference>
<dbReference type="PANTHER" id="PTHR23087">
    <property type="entry name" value="NONHISTONE CHROMOSOMAL PROTEIN HMG"/>
    <property type="match status" value="1"/>
</dbReference>
<dbReference type="Pfam" id="PF01101">
    <property type="entry name" value="HMG14_17"/>
    <property type="match status" value="1"/>
</dbReference>
<dbReference type="PRINTS" id="PR00925">
    <property type="entry name" value="NONHISHMG17"/>
</dbReference>
<dbReference type="SMART" id="SM00527">
    <property type="entry name" value="HMG17"/>
    <property type="match status" value="1"/>
</dbReference>
<dbReference type="PROSITE" id="PS00355">
    <property type="entry name" value="HMG14_17"/>
    <property type="match status" value="1"/>
</dbReference>
<gene>
    <name type="primary">HMGN2</name>
    <name type="synonym">HMG17</name>
</gene>
<proteinExistence type="evidence at protein level"/>
<accession>P05204</accession>
<accession>Q0VGD5</accession>
<accession>Q6FGI5</accession>
<accession>Q96C64</accession>
<protein>
    <recommendedName>
        <fullName>Non-histone chromosomal protein HMG-17</fullName>
    </recommendedName>
    <alternativeName>
        <fullName>High mobility group nucleosome-binding domain-containing protein 2</fullName>
    </alternativeName>
</protein>
<reference key="1">
    <citation type="journal article" date="1986" name="J. Biol. Chem.">
        <title>Chromosomal protein HMG-17. Complete human cDNA sequence and evidence for a multigene family.</title>
        <authorList>
            <person name="Landsman D."/>
            <person name="Soares N."/>
            <person name="Gonzalez F.J."/>
            <person name="Bustin M."/>
        </authorList>
    </citation>
    <scope>NUCLEOTIDE SEQUENCE [MRNA]</scope>
</reference>
<reference key="2">
    <citation type="journal article" date="1989" name="Nucleic Acids Res.">
        <title>Human non-histone chromosomal protein HMG-17: identification, characterization, chromosome localization and RFLPs of a functional gene from the large multigene family.</title>
        <authorList>
            <person name="Landsman D."/>
            <person name="McBride O.W."/>
            <person name="Bustin M."/>
        </authorList>
    </citation>
    <scope>NUCLEOTIDE SEQUENCE [GENOMIC DNA]</scope>
</reference>
<reference key="3">
    <citation type="submission" date="2004-06" db="EMBL/GenBank/DDBJ databases">
        <title>Cloning of human full open reading frames in Gateway(TM) system entry vector (pDONR201).</title>
        <authorList>
            <person name="Halleck A."/>
            <person name="Ebert L."/>
            <person name="Mkoundinya M."/>
            <person name="Schick M."/>
            <person name="Eisenstein S."/>
            <person name="Neubert P."/>
            <person name="Kstrang K."/>
            <person name="Schatten R."/>
            <person name="Shen B."/>
            <person name="Henze S."/>
            <person name="Mar W."/>
            <person name="Korn B."/>
            <person name="Zuo D."/>
            <person name="Hu Y."/>
            <person name="LaBaer J."/>
        </authorList>
    </citation>
    <scope>NUCLEOTIDE SEQUENCE [LARGE SCALE MRNA]</scope>
</reference>
<reference key="4">
    <citation type="journal article" date="2006" name="Nature">
        <title>The DNA sequence and biological annotation of human chromosome 1.</title>
        <authorList>
            <person name="Gregory S.G."/>
            <person name="Barlow K.F."/>
            <person name="McLay K.E."/>
            <person name="Kaul R."/>
            <person name="Swarbreck D."/>
            <person name="Dunham A."/>
            <person name="Scott C.E."/>
            <person name="Howe K.L."/>
            <person name="Woodfine K."/>
            <person name="Spencer C.C.A."/>
            <person name="Jones M.C."/>
            <person name="Gillson C."/>
            <person name="Searle S."/>
            <person name="Zhou Y."/>
            <person name="Kokocinski F."/>
            <person name="McDonald L."/>
            <person name="Evans R."/>
            <person name="Phillips K."/>
            <person name="Atkinson A."/>
            <person name="Cooper R."/>
            <person name="Jones C."/>
            <person name="Hall R.E."/>
            <person name="Andrews T.D."/>
            <person name="Lloyd C."/>
            <person name="Ainscough R."/>
            <person name="Almeida J.P."/>
            <person name="Ambrose K.D."/>
            <person name="Anderson F."/>
            <person name="Andrew R.W."/>
            <person name="Ashwell R.I.S."/>
            <person name="Aubin K."/>
            <person name="Babbage A.K."/>
            <person name="Bagguley C.L."/>
            <person name="Bailey J."/>
            <person name="Beasley H."/>
            <person name="Bethel G."/>
            <person name="Bird C.P."/>
            <person name="Bray-Allen S."/>
            <person name="Brown J.Y."/>
            <person name="Brown A.J."/>
            <person name="Buckley D."/>
            <person name="Burton J."/>
            <person name="Bye J."/>
            <person name="Carder C."/>
            <person name="Chapman J.C."/>
            <person name="Clark S.Y."/>
            <person name="Clarke G."/>
            <person name="Clee C."/>
            <person name="Cobley V."/>
            <person name="Collier R.E."/>
            <person name="Corby N."/>
            <person name="Coville G.J."/>
            <person name="Davies J."/>
            <person name="Deadman R."/>
            <person name="Dunn M."/>
            <person name="Earthrowl M."/>
            <person name="Ellington A.G."/>
            <person name="Errington H."/>
            <person name="Frankish A."/>
            <person name="Frankland J."/>
            <person name="French L."/>
            <person name="Garner P."/>
            <person name="Garnett J."/>
            <person name="Gay L."/>
            <person name="Ghori M.R.J."/>
            <person name="Gibson R."/>
            <person name="Gilby L.M."/>
            <person name="Gillett W."/>
            <person name="Glithero R.J."/>
            <person name="Grafham D.V."/>
            <person name="Griffiths C."/>
            <person name="Griffiths-Jones S."/>
            <person name="Grocock R."/>
            <person name="Hammond S."/>
            <person name="Harrison E.S.I."/>
            <person name="Hart E."/>
            <person name="Haugen E."/>
            <person name="Heath P.D."/>
            <person name="Holmes S."/>
            <person name="Holt K."/>
            <person name="Howden P.J."/>
            <person name="Hunt A.R."/>
            <person name="Hunt S.E."/>
            <person name="Hunter G."/>
            <person name="Isherwood J."/>
            <person name="James R."/>
            <person name="Johnson C."/>
            <person name="Johnson D."/>
            <person name="Joy A."/>
            <person name="Kay M."/>
            <person name="Kershaw J.K."/>
            <person name="Kibukawa M."/>
            <person name="Kimberley A.M."/>
            <person name="King A."/>
            <person name="Knights A.J."/>
            <person name="Lad H."/>
            <person name="Laird G."/>
            <person name="Lawlor S."/>
            <person name="Leongamornlert D.A."/>
            <person name="Lloyd D.M."/>
            <person name="Loveland J."/>
            <person name="Lovell J."/>
            <person name="Lush M.J."/>
            <person name="Lyne R."/>
            <person name="Martin S."/>
            <person name="Mashreghi-Mohammadi M."/>
            <person name="Matthews L."/>
            <person name="Matthews N.S.W."/>
            <person name="McLaren S."/>
            <person name="Milne S."/>
            <person name="Mistry S."/>
            <person name="Moore M.J.F."/>
            <person name="Nickerson T."/>
            <person name="O'Dell C.N."/>
            <person name="Oliver K."/>
            <person name="Palmeiri A."/>
            <person name="Palmer S.A."/>
            <person name="Parker A."/>
            <person name="Patel D."/>
            <person name="Pearce A.V."/>
            <person name="Peck A.I."/>
            <person name="Pelan S."/>
            <person name="Phelps K."/>
            <person name="Phillimore B.J."/>
            <person name="Plumb R."/>
            <person name="Rajan J."/>
            <person name="Raymond C."/>
            <person name="Rouse G."/>
            <person name="Saenphimmachak C."/>
            <person name="Sehra H.K."/>
            <person name="Sheridan E."/>
            <person name="Shownkeen R."/>
            <person name="Sims S."/>
            <person name="Skuce C.D."/>
            <person name="Smith M."/>
            <person name="Steward C."/>
            <person name="Subramanian S."/>
            <person name="Sycamore N."/>
            <person name="Tracey A."/>
            <person name="Tromans A."/>
            <person name="Van Helmond Z."/>
            <person name="Wall M."/>
            <person name="Wallis J.M."/>
            <person name="White S."/>
            <person name="Whitehead S.L."/>
            <person name="Wilkinson J.E."/>
            <person name="Willey D.L."/>
            <person name="Williams H."/>
            <person name="Wilming L."/>
            <person name="Wray P.W."/>
            <person name="Wu Z."/>
            <person name="Coulson A."/>
            <person name="Vaudin M."/>
            <person name="Sulston J.E."/>
            <person name="Durbin R.M."/>
            <person name="Hubbard T."/>
            <person name="Wooster R."/>
            <person name="Dunham I."/>
            <person name="Carter N.P."/>
            <person name="McVean G."/>
            <person name="Ross M.T."/>
            <person name="Harrow J."/>
            <person name="Olson M.V."/>
            <person name="Beck S."/>
            <person name="Rogers J."/>
            <person name="Bentley D.R."/>
        </authorList>
    </citation>
    <scope>NUCLEOTIDE SEQUENCE [LARGE SCALE GENOMIC DNA]</scope>
</reference>
<reference key="5">
    <citation type="journal article" date="2004" name="Genome Res.">
        <title>The status, quality, and expansion of the NIH full-length cDNA project: the Mammalian Gene Collection (MGC).</title>
        <authorList>
            <consortium name="The MGC Project Team"/>
        </authorList>
    </citation>
    <scope>NUCLEOTIDE SEQUENCE [LARGE SCALE MRNA]</scope>
    <source>
        <tissue>Brain</tissue>
        <tissue>Colon</tissue>
        <tissue>Eye</tissue>
        <tissue>Lung</tissue>
        <tissue>Lymph</tissue>
        <tissue>Mammary gland</tissue>
        <tissue>Muscle</tissue>
        <tissue>Salivary gland</tissue>
        <tissue>Skin</tissue>
    </source>
</reference>
<reference key="6">
    <citation type="journal article" date="1991" name="Eur. J. Biochem.">
        <title>Comparison of multiple forms of the high mobility group I proteins in rodent and human cells. Identification of the human high mobility group I-C protein.</title>
        <authorList>
            <person name="Giancotti V."/>
            <person name="Bandiera A."/>
            <person name="Buratti E."/>
            <person name="Fusco A."/>
            <person name="Marzari R."/>
            <person name="Coles B."/>
            <person name="Goodwin G.H."/>
        </authorList>
    </citation>
    <scope>PROTEIN SEQUENCE OF 2-28</scope>
    <scope>VARIANT LYS-7</scope>
    <source>
        <tissue>Peripheral blood lymphocyte</tissue>
    </source>
</reference>
<reference key="7">
    <citation type="journal article" date="2000" name="Protein Sci.">
        <title>Phosphorylation and subcellular redistribution of high mobility group proteins 14 and 17, analyzed by mass spectrometry.</title>
        <authorList>
            <person name="Louie D.F."/>
            <person name="Gloor K.K."/>
            <person name="Galasinski S.C."/>
            <person name="Resing K.A."/>
            <person name="Ahn N.G."/>
        </authorList>
    </citation>
    <scope>PROTEIN SEQUENCE OF 19-31</scope>
    <scope>PHOSPHORYLATION AT SER-25 AND SER-29</scope>
    <scope>SUBCELLULAR LOCATION</scope>
    <scope>MASS SPECTROMETRY</scope>
</reference>
<reference key="8">
    <citation type="journal article" date="2009" name="Science">
        <title>Lysine acetylation targets protein complexes and co-regulates major cellular functions.</title>
        <authorList>
            <person name="Choudhary C."/>
            <person name="Kumar C."/>
            <person name="Gnad F."/>
            <person name="Nielsen M.L."/>
            <person name="Rehman M."/>
            <person name="Walther T.C."/>
            <person name="Olsen J.V."/>
            <person name="Mann M."/>
        </authorList>
    </citation>
    <scope>ACETYLATION [LARGE SCALE ANALYSIS] AT LYS-82</scope>
    <scope>IDENTIFICATION BY MASS SPECTROMETRY [LARGE SCALE ANALYSIS]</scope>
</reference>
<reference key="9">
    <citation type="journal article" date="2011" name="BMC Syst. Biol.">
        <title>Initial characterization of the human central proteome.</title>
        <authorList>
            <person name="Burkard T.R."/>
            <person name="Planyavsky M."/>
            <person name="Kaupe I."/>
            <person name="Breitwieser F.P."/>
            <person name="Buerckstuemmer T."/>
            <person name="Bennett K.L."/>
            <person name="Superti-Furga G."/>
            <person name="Colinge J."/>
        </authorList>
    </citation>
    <scope>IDENTIFICATION BY MASS SPECTROMETRY [LARGE SCALE ANALYSIS]</scope>
</reference>
<reference key="10">
    <citation type="journal article" date="2014" name="Nat. Struct. Mol. Biol.">
        <title>Uncovering global SUMOylation signaling networks in a site-specific manner.</title>
        <authorList>
            <person name="Hendriks I.A."/>
            <person name="D'Souza R.C."/>
            <person name="Yang B."/>
            <person name="Verlaan-de Vries M."/>
            <person name="Mann M."/>
            <person name="Vertegaal A.C."/>
        </authorList>
    </citation>
    <scope>SUMOYLATION [LARGE SCALE ANALYSIS] AT LYS-82</scope>
    <scope>IDENTIFICATION BY MASS SPECTROMETRY [LARGE SCALE ANALYSIS]</scope>
</reference>
<reference key="11">
    <citation type="journal article" date="2017" name="Mol. Cell">
        <title>Serine ADP-ribosylation depends on HPF1.</title>
        <authorList>
            <person name="Bonfiglio J.J."/>
            <person name="Fontana P."/>
            <person name="Zhang Q."/>
            <person name="Colby T."/>
            <person name="Gibbs-Seymour I."/>
            <person name="Atanassov I."/>
            <person name="Bartlett E."/>
            <person name="Zaja R."/>
            <person name="Ahel I."/>
            <person name="Matic I."/>
        </authorList>
    </citation>
    <scope>ADP-RIBOSYLATION AT SER-29</scope>
</reference>
<evidence type="ECO:0000250" key="1"/>
<evidence type="ECO:0000256" key="2">
    <source>
        <dbReference type="SAM" id="MobiDB-lite"/>
    </source>
</evidence>
<evidence type="ECO:0000269" key="3">
    <source>
    </source>
</evidence>
<evidence type="ECO:0000269" key="4">
    <source>
    </source>
</evidence>
<evidence type="ECO:0000269" key="5">
    <source>
    </source>
</evidence>
<evidence type="ECO:0000305" key="6"/>
<evidence type="ECO:0007744" key="7">
    <source>
    </source>
</evidence>
<evidence type="ECO:0007744" key="8">
    <source>
    </source>
</evidence>
<feature type="initiator methionine" description="Removed" evidence="4">
    <location>
        <position position="1"/>
    </location>
</feature>
<feature type="chain" id="PRO_0000206697" description="Non-histone chromosomal protein HMG-17">
    <location>
        <begin position="2"/>
        <end position="90"/>
    </location>
</feature>
<feature type="region of interest" description="Disordered" evidence="2">
    <location>
        <begin position="1"/>
        <end position="90"/>
    </location>
</feature>
<feature type="compositionally biased region" description="Basic and acidic residues" evidence="2">
    <location>
        <begin position="1"/>
        <end position="23"/>
    </location>
</feature>
<feature type="compositionally biased region" description="Basic and acidic residues" evidence="2">
    <location>
        <begin position="37"/>
        <end position="64"/>
    </location>
</feature>
<feature type="compositionally biased region" description="Basic and acidic residues" evidence="2">
    <location>
        <begin position="73"/>
        <end position="90"/>
    </location>
</feature>
<feature type="modified residue" description="Phosphoserine" evidence="3">
    <location>
        <position position="25"/>
    </location>
</feature>
<feature type="modified residue" description="ADP-ribosylserine; alternate" evidence="5">
    <location>
        <position position="29"/>
    </location>
</feature>
<feature type="modified residue" description="Phosphoserine; alternate" evidence="3">
    <location>
        <position position="29"/>
    </location>
</feature>
<feature type="modified residue" description="N6-acetyllysine; alternate" evidence="7">
    <location>
        <position position="82"/>
    </location>
</feature>
<feature type="cross-link" description="Glycyl lysine isopeptide (Lys-Gly) (interchain with G-Cter in SUMO2); alternate" evidence="8">
    <location>
        <position position="82"/>
    </location>
</feature>
<feature type="sequence variant" id="VAR_003716" description="In variant H17." evidence="4">
    <original>E</original>
    <variation>K</variation>
    <location>
        <position position="7"/>
    </location>
</feature>
<feature type="sequence conflict" description="In Ref. 1." evidence="6" ref="1">
    <original>K</original>
    <variation>N</variation>
    <location>
        <position position="5"/>
    </location>
</feature>
<feature type="sequence conflict" description="In Ref. 6; AA sequence." evidence="6" ref="6">
    <original>AR</original>
    <variation>SA</variation>
    <location>
        <begin position="26"/>
        <end position="27"/>
    </location>
</feature>